<evidence type="ECO:0000250" key="1">
    <source>
        <dbReference type="UniProtKB" id="O48814"/>
    </source>
</evidence>
<evidence type="ECO:0000255" key="2"/>
<evidence type="ECO:0000255" key="3">
    <source>
        <dbReference type="PROSITE-ProRule" id="PRU00159"/>
    </source>
</evidence>
<evidence type="ECO:0000255" key="4">
    <source>
        <dbReference type="PROSITE-ProRule" id="PRU10027"/>
    </source>
</evidence>
<evidence type="ECO:0000256" key="5">
    <source>
        <dbReference type="SAM" id="MobiDB-lite"/>
    </source>
</evidence>
<evidence type="ECO:0000269" key="6">
    <source>
    </source>
</evidence>
<evidence type="ECO:0000305" key="7"/>
<organism>
    <name type="scientific">Arabidopsis thaliana</name>
    <name type="common">Mouse-ear cress</name>
    <dbReference type="NCBI Taxonomy" id="3702"/>
    <lineage>
        <taxon>Eukaryota</taxon>
        <taxon>Viridiplantae</taxon>
        <taxon>Streptophyta</taxon>
        <taxon>Embryophyta</taxon>
        <taxon>Tracheophyta</taxon>
        <taxon>Spermatophyta</taxon>
        <taxon>Magnoliopsida</taxon>
        <taxon>eudicotyledons</taxon>
        <taxon>Gunneridae</taxon>
        <taxon>Pentapetalae</taxon>
        <taxon>rosids</taxon>
        <taxon>malvids</taxon>
        <taxon>Brassicales</taxon>
        <taxon>Brassicaceae</taxon>
        <taxon>Camelineae</taxon>
        <taxon>Arabidopsis</taxon>
    </lineage>
</organism>
<dbReference type="EC" id="2.7.11.1"/>
<dbReference type="EMBL" id="AC005315">
    <property type="protein sequence ID" value="AAC33227.1"/>
    <property type="molecule type" value="Genomic_DNA"/>
</dbReference>
<dbReference type="EMBL" id="CP002685">
    <property type="protein sequence ID" value="AEC08197.1"/>
    <property type="molecule type" value="Genomic_DNA"/>
</dbReference>
<dbReference type="EMBL" id="CP002685">
    <property type="protein sequence ID" value="ANM63285.1"/>
    <property type="molecule type" value="Genomic_DNA"/>
</dbReference>
<dbReference type="EMBL" id="FJ708706">
    <property type="protein sequence ID" value="ACN59301.1"/>
    <property type="molecule type" value="mRNA"/>
</dbReference>
<dbReference type="PIR" id="T02731">
    <property type="entry name" value="T02731"/>
</dbReference>
<dbReference type="RefSeq" id="NP_001318310.1">
    <property type="nucleotide sequence ID" value="NM_001336195.1"/>
</dbReference>
<dbReference type="RefSeq" id="NP_180465.1">
    <property type="nucleotide sequence ID" value="NM_128458.2"/>
</dbReference>
<dbReference type="SMR" id="O81069"/>
<dbReference type="BioGRID" id="2798">
    <property type="interactions" value="48"/>
</dbReference>
<dbReference type="FunCoup" id="O81069">
    <property type="interactions" value="129"/>
</dbReference>
<dbReference type="IntAct" id="O81069">
    <property type="interactions" value="45"/>
</dbReference>
<dbReference type="STRING" id="3702.O81069"/>
<dbReference type="GlyGen" id="O81069">
    <property type="glycosylation" value="14 sites"/>
</dbReference>
<dbReference type="PaxDb" id="3702-AT2G28990.1"/>
<dbReference type="ProteomicsDB" id="232400"/>
<dbReference type="EnsemblPlants" id="AT2G28990.1">
    <property type="protein sequence ID" value="AT2G28990.1"/>
    <property type="gene ID" value="AT2G28990"/>
</dbReference>
<dbReference type="EnsemblPlants" id="AT2G28990.2">
    <property type="protein sequence ID" value="AT2G28990.2"/>
    <property type="gene ID" value="AT2G28990"/>
</dbReference>
<dbReference type="GeneID" id="817448"/>
<dbReference type="Gramene" id="AT2G28990.1">
    <property type="protein sequence ID" value="AT2G28990.1"/>
    <property type="gene ID" value="AT2G28990"/>
</dbReference>
<dbReference type="Gramene" id="AT2G28990.2">
    <property type="protein sequence ID" value="AT2G28990.2"/>
    <property type="gene ID" value="AT2G28990"/>
</dbReference>
<dbReference type="KEGG" id="ath:AT2G28990"/>
<dbReference type="Araport" id="AT2G28990"/>
<dbReference type="TAIR" id="AT2G28990"/>
<dbReference type="eggNOG" id="ENOG502QQCZ">
    <property type="taxonomic scope" value="Eukaryota"/>
</dbReference>
<dbReference type="HOGENOM" id="CLU_000288_41_1_1"/>
<dbReference type="InParanoid" id="O81069"/>
<dbReference type="OMA" id="DPEWTQI"/>
<dbReference type="PhylomeDB" id="O81069"/>
<dbReference type="PRO" id="PR:O81069"/>
<dbReference type="Proteomes" id="UP000006548">
    <property type="component" value="Chromosome 2"/>
</dbReference>
<dbReference type="ExpressionAtlas" id="O81069">
    <property type="expression patterns" value="baseline and differential"/>
</dbReference>
<dbReference type="GO" id="GO:0016020">
    <property type="term" value="C:membrane"/>
    <property type="evidence" value="ECO:0007669"/>
    <property type="project" value="UniProtKB-SubCell"/>
</dbReference>
<dbReference type="GO" id="GO:0005524">
    <property type="term" value="F:ATP binding"/>
    <property type="evidence" value="ECO:0007669"/>
    <property type="project" value="UniProtKB-KW"/>
</dbReference>
<dbReference type="GO" id="GO:0106310">
    <property type="term" value="F:protein serine kinase activity"/>
    <property type="evidence" value="ECO:0007669"/>
    <property type="project" value="RHEA"/>
</dbReference>
<dbReference type="GO" id="GO:0004674">
    <property type="term" value="F:protein serine/threonine kinase activity"/>
    <property type="evidence" value="ECO:0007669"/>
    <property type="project" value="UniProtKB-KW"/>
</dbReference>
<dbReference type="CDD" id="cd14066">
    <property type="entry name" value="STKc_IRAK"/>
    <property type="match status" value="1"/>
</dbReference>
<dbReference type="FunFam" id="3.80.10.10:FF:000129">
    <property type="entry name" value="Leucine-rich repeat receptor-like kinase"/>
    <property type="match status" value="1"/>
</dbReference>
<dbReference type="FunFam" id="3.30.200.20:FF:000394">
    <property type="entry name" value="Leucine-rich repeat receptor-like protein kinase"/>
    <property type="match status" value="1"/>
</dbReference>
<dbReference type="FunFam" id="1.10.510.10:FF:000146">
    <property type="entry name" value="LRR receptor-like serine/threonine-protein kinase IOS1"/>
    <property type="match status" value="1"/>
</dbReference>
<dbReference type="Gene3D" id="2.60.120.430">
    <property type="entry name" value="Galactose-binding lectin"/>
    <property type="match status" value="1"/>
</dbReference>
<dbReference type="Gene3D" id="3.30.200.20">
    <property type="entry name" value="Phosphorylase Kinase, domain 1"/>
    <property type="match status" value="1"/>
</dbReference>
<dbReference type="Gene3D" id="3.80.10.10">
    <property type="entry name" value="Ribonuclease Inhibitor"/>
    <property type="match status" value="1"/>
</dbReference>
<dbReference type="Gene3D" id="1.10.510.10">
    <property type="entry name" value="Transferase(Phosphotransferase) domain 1"/>
    <property type="match status" value="1"/>
</dbReference>
<dbReference type="InterPro" id="IPR011009">
    <property type="entry name" value="Kinase-like_dom_sf"/>
</dbReference>
<dbReference type="InterPro" id="IPR001611">
    <property type="entry name" value="Leu-rich_rpt"/>
</dbReference>
<dbReference type="InterPro" id="IPR032675">
    <property type="entry name" value="LRR_dom_sf"/>
</dbReference>
<dbReference type="InterPro" id="IPR024788">
    <property type="entry name" value="Malectin-like_Carb-bd_dom"/>
</dbReference>
<dbReference type="InterPro" id="IPR000719">
    <property type="entry name" value="Prot_kinase_dom"/>
</dbReference>
<dbReference type="InterPro" id="IPR017441">
    <property type="entry name" value="Protein_kinase_ATP_BS"/>
</dbReference>
<dbReference type="InterPro" id="IPR008271">
    <property type="entry name" value="Ser/Thr_kinase_AS"/>
</dbReference>
<dbReference type="PANTHER" id="PTHR45631:SF124">
    <property type="entry name" value="LEUCINE-RICH REPEAT PROTEIN KINASE FAMILY PROTEIN"/>
    <property type="match status" value="1"/>
</dbReference>
<dbReference type="PANTHER" id="PTHR45631">
    <property type="entry name" value="OS07G0107800 PROTEIN-RELATED"/>
    <property type="match status" value="1"/>
</dbReference>
<dbReference type="Pfam" id="PF00560">
    <property type="entry name" value="LRR_1"/>
    <property type="match status" value="1"/>
</dbReference>
<dbReference type="Pfam" id="PF12819">
    <property type="entry name" value="Malectin_like"/>
    <property type="match status" value="1"/>
</dbReference>
<dbReference type="Pfam" id="PF00069">
    <property type="entry name" value="Pkinase"/>
    <property type="match status" value="1"/>
</dbReference>
<dbReference type="SMART" id="SM00220">
    <property type="entry name" value="S_TKc"/>
    <property type="match status" value="1"/>
</dbReference>
<dbReference type="SUPFAM" id="SSF52058">
    <property type="entry name" value="L domain-like"/>
    <property type="match status" value="1"/>
</dbReference>
<dbReference type="SUPFAM" id="SSF56112">
    <property type="entry name" value="Protein kinase-like (PK-like)"/>
    <property type="match status" value="1"/>
</dbReference>
<dbReference type="PROSITE" id="PS00107">
    <property type="entry name" value="PROTEIN_KINASE_ATP"/>
    <property type="match status" value="1"/>
</dbReference>
<dbReference type="PROSITE" id="PS50011">
    <property type="entry name" value="PROTEIN_KINASE_DOM"/>
    <property type="match status" value="1"/>
</dbReference>
<dbReference type="PROSITE" id="PS00108">
    <property type="entry name" value="PROTEIN_KINASE_ST"/>
    <property type="match status" value="1"/>
</dbReference>
<feature type="signal peptide" evidence="2">
    <location>
        <begin position="1"/>
        <end position="19"/>
    </location>
</feature>
<feature type="chain" id="PRO_0000389456" description="Probable leucine-rich repeat receptor-like protein kinase At2g28990">
    <location>
        <begin position="20"/>
        <end position="884"/>
    </location>
</feature>
<feature type="topological domain" description="Extracellular" evidence="2">
    <location>
        <begin position="20"/>
        <end position="508"/>
    </location>
</feature>
<feature type="transmembrane region" description="Helical" evidence="2">
    <location>
        <begin position="509"/>
        <end position="529"/>
    </location>
</feature>
<feature type="topological domain" description="Cytoplasmic" evidence="2">
    <location>
        <begin position="530"/>
        <end position="884"/>
    </location>
</feature>
<feature type="repeat" description="LRR 1">
    <location>
        <begin position="404"/>
        <end position="427"/>
    </location>
</feature>
<feature type="repeat" description="LRR 2">
    <location>
        <begin position="428"/>
        <end position="451"/>
    </location>
</feature>
<feature type="repeat" description="LRR 3">
    <location>
        <begin position="452"/>
        <end position="476"/>
    </location>
</feature>
<feature type="domain" description="Protein kinase" evidence="3">
    <location>
        <begin position="577"/>
        <end position="850"/>
    </location>
</feature>
<feature type="region of interest" description="Disordered" evidence="5">
    <location>
        <begin position="535"/>
        <end position="559"/>
    </location>
</feature>
<feature type="compositionally biased region" description="Polar residues" evidence="5">
    <location>
        <begin position="546"/>
        <end position="559"/>
    </location>
</feature>
<feature type="active site" description="Proton acceptor" evidence="3 4">
    <location>
        <position position="702"/>
    </location>
</feature>
<feature type="binding site" evidence="3">
    <location>
        <begin position="583"/>
        <end position="591"/>
    </location>
    <ligand>
        <name>ATP</name>
        <dbReference type="ChEBI" id="CHEBI:30616"/>
    </ligand>
</feature>
<feature type="binding site" evidence="3">
    <location>
        <position position="605"/>
    </location>
    <ligand>
        <name>ATP</name>
        <dbReference type="ChEBI" id="CHEBI:30616"/>
    </ligand>
</feature>
<feature type="modified residue" description="Phosphothreonine" evidence="1">
    <location>
        <position position="568"/>
    </location>
</feature>
<feature type="modified residue" description="Phosphotyrosine" evidence="1">
    <location>
        <position position="650"/>
    </location>
</feature>
<feature type="modified residue" description="Phosphoserine" evidence="1">
    <location>
        <position position="736"/>
    </location>
</feature>
<feature type="modified residue" description="Phosphothreonine" evidence="1">
    <location>
        <position position="737"/>
    </location>
</feature>
<feature type="modified residue" description="Phosphothreonine" evidence="1">
    <location>
        <position position="742"/>
    </location>
</feature>
<feature type="modified residue" description="Phosphotyrosine" evidence="1">
    <location>
        <position position="750"/>
    </location>
</feature>
<feature type="glycosylation site" description="N-linked (GlcNAc...) asparagine" evidence="2">
    <location>
        <position position="70"/>
    </location>
</feature>
<feature type="glycosylation site" description="N-linked (GlcNAc...) asparagine" evidence="2">
    <location>
        <position position="177"/>
    </location>
</feature>
<feature type="glycosylation site" description="N-linked (GlcNAc...) asparagine" evidence="2">
    <location>
        <position position="217"/>
    </location>
</feature>
<feature type="glycosylation site" description="N-linked (GlcNAc...) asparagine" evidence="2">
    <location>
        <position position="231"/>
    </location>
</feature>
<feature type="glycosylation site" description="N-linked (GlcNAc...) asparagine" evidence="2">
    <location>
        <position position="251"/>
    </location>
</feature>
<feature type="glycosylation site" description="N-linked (GlcNAc...) asparagine" evidence="2">
    <location>
        <position position="284"/>
    </location>
</feature>
<feature type="glycosylation site" description="N-linked (GlcNAc...) asparagine" evidence="2">
    <location>
        <position position="298"/>
    </location>
</feature>
<feature type="glycosylation site" description="N-linked (GlcNAc...) asparagine" evidence="2">
    <location>
        <position position="334"/>
    </location>
</feature>
<feature type="glycosylation site" description="N-linked (GlcNAc...) asparagine" evidence="2">
    <location>
        <position position="418"/>
    </location>
</feature>
<feature type="glycosylation site" description="N-linked (GlcNAc...) asparagine" evidence="2">
    <location>
        <position position="427"/>
    </location>
</feature>
<feature type="glycosylation site" description="N-linked (GlcNAc...) asparagine" evidence="2">
    <location>
        <position position="438"/>
    </location>
</feature>
<feature type="glycosylation site" description="N-linked (GlcNAc...) asparagine" evidence="2">
    <location>
        <position position="459"/>
    </location>
</feature>
<feature type="glycosylation site" description="N-linked (GlcNAc...) asparagine" evidence="2">
    <location>
        <position position="464"/>
    </location>
</feature>
<gene>
    <name type="ordered locus">At2g28990</name>
    <name type="ORF">T9I4.7</name>
</gene>
<reference key="1">
    <citation type="journal article" date="1999" name="Nature">
        <title>Sequence and analysis of chromosome 2 of the plant Arabidopsis thaliana.</title>
        <authorList>
            <person name="Lin X."/>
            <person name="Kaul S."/>
            <person name="Rounsley S.D."/>
            <person name="Shea T.P."/>
            <person name="Benito M.-I."/>
            <person name="Town C.D."/>
            <person name="Fujii C.Y."/>
            <person name="Mason T.M."/>
            <person name="Bowman C.L."/>
            <person name="Barnstead M.E."/>
            <person name="Feldblyum T.V."/>
            <person name="Buell C.R."/>
            <person name="Ketchum K.A."/>
            <person name="Lee J.J."/>
            <person name="Ronning C.M."/>
            <person name="Koo H.L."/>
            <person name="Moffat K.S."/>
            <person name="Cronin L.A."/>
            <person name="Shen M."/>
            <person name="Pai G."/>
            <person name="Van Aken S."/>
            <person name="Umayam L."/>
            <person name="Tallon L.J."/>
            <person name="Gill J.E."/>
            <person name="Adams M.D."/>
            <person name="Carrera A.J."/>
            <person name="Creasy T.H."/>
            <person name="Goodman H.M."/>
            <person name="Somerville C.R."/>
            <person name="Copenhaver G.P."/>
            <person name="Preuss D."/>
            <person name="Nierman W.C."/>
            <person name="White O."/>
            <person name="Eisen J.A."/>
            <person name="Salzberg S.L."/>
            <person name="Fraser C.M."/>
            <person name="Venter J.C."/>
        </authorList>
    </citation>
    <scope>NUCLEOTIDE SEQUENCE [LARGE SCALE GENOMIC DNA]</scope>
    <source>
        <strain>cv. Columbia</strain>
    </source>
</reference>
<reference key="2">
    <citation type="journal article" date="2017" name="Plant J.">
        <title>Araport11: a complete reannotation of the Arabidopsis thaliana reference genome.</title>
        <authorList>
            <person name="Cheng C.Y."/>
            <person name="Krishnakumar V."/>
            <person name="Chan A.P."/>
            <person name="Thibaud-Nissen F."/>
            <person name="Schobel S."/>
            <person name="Town C.D."/>
        </authorList>
    </citation>
    <scope>GENOME REANNOTATION</scope>
    <source>
        <strain>cv. Columbia</strain>
    </source>
</reference>
<reference key="3">
    <citation type="journal article" date="2010" name="BMC Genomics">
        <title>Genome-wide cloning and sequence analysis of leucine-rich repeat receptor-like protein kinase genes in Arabidopsis thaliana.</title>
        <authorList>
            <person name="Gou X."/>
            <person name="He K."/>
            <person name="Yang H."/>
            <person name="Yuan T."/>
            <person name="Lin H."/>
            <person name="Clouse S.D."/>
            <person name="Li J."/>
        </authorList>
    </citation>
    <scope>NUCLEOTIDE SEQUENCE [LARGE SCALE MRNA]</scope>
    <source>
        <strain>cv. Columbia</strain>
    </source>
</reference>
<reference key="4">
    <citation type="journal article" date="2010" name="Front. Physiol.">
        <title>A membrane protein/signaling protein interaction network for Arabidopsis version AMPv2.</title>
        <authorList>
            <person name="Lalonde S."/>
            <person name="Sero A."/>
            <person name="Pratelli R."/>
            <person name="Pilot G."/>
            <person name="Chen J."/>
            <person name="Sardi M.I."/>
            <person name="Parsa S.A."/>
            <person name="Kim D.Y."/>
            <person name="Acharya B.R."/>
            <person name="Stein E.V."/>
            <person name="Hu H.C."/>
            <person name="Villiers F."/>
            <person name="Takeda K."/>
            <person name="Yang Y."/>
            <person name="Han Y.S."/>
            <person name="Schwacke R."/>
            <person name="Chiang W."/>
            <person name="Kato N."/>
            <person name="Loque D."/>
            <person name="Assmann S.M."/>
            <person name="Kwak J.M."/>
            <person name="Schroeder J.I."/>
            <person name="Rhee S.Y."/>
            <person name="Frommer W.B."/>
        </authorList>
    </citation>
    <scope>INTERACTION WITH AMT1-1</scope>
</reference>
<keyword id="KW-0067">ATP-binding</keyword>
<keyword id="KW-0325">Glycoprotein</keyword>
<keyword id="KW-0418">Kinase</keyword>
<keyword id="KW-0433">Leucine-rich repeat</keyword>
<keyword id="KW-0472">Membrane</keyword>
<keyword id="KW-0547">Nucleotide-binding</keyword>
<keyword id="KW-0597">Phosphoprotein</keyword>
<keyword id="KW-0675">Receptor</keyword>
<keyword id="KW-1185">Reference proteome</keyword>
<keyword id="KW-0677">Repeat</keyword>
<keyword id="KW-0723">Serine/threonine-protein kinase</keyword>
<keyword id="KW-0732">Signal</keyword>
<keyword id="KW-0808">Transferase</keyword>
<keyword id="KW-0812">Transmembrane</keyword>
<keyword id="KW-1133">Transmembrane helix</keyword>
<sequence>MKIHLLLAMIGTFVVIIGAQDQEGFISLDCGLPSDESPYDDSFNGLTFTSDSTFIQTGKIDSVDKDLNINLSKQYLTLRYFPEGKRNCYSLDVKRGTTYLIVVSFVYGNYDGLNRDPNFDIHLGPNKWKRIDLDGEKEGTREEIIHKARSNSLDICLVKTGETLPIISAIEIRPLRNNTYVTQSGSLMMSFRVYLSNSDASIRYADDVHDRIWSPFNGSSHTHITTDLNINNSNAYEIPKNILQTAAIPRNASAPLIITWDPLPINAEVYLYMHFAEIQTLEANETRQFDVILRGNFNHSGFSPTKLKVFTLYTEEPMKCGSEGCYLQLVKTPNSTLPPLINAIEAYSVIEFSQLETSLSDVDAIKNIKNTYKLNKITWQGDPCLPQDLSWESIRCTYVDGSTSPTIISLDLSKSGLNGSIPQILQNFTQLQELDLSNNSLTGPVPIFLANMKTLSLINLSGNNLSGSVPQALLDKEKEGLVLKLEGNPDLCKSSFCNTEKKNKFLLPVIASAASLVIVVVVVALFFVFRKKKASPSNLHAPPSMPVSNPGHNSQSESSFTSKKIRFTYSEVQEMTNNFDKALGEGGFGVVYHGFVNVIEQVAVKLLSQSSSQGYKHFKAEVELLMRVHHINLVSLVGYCDEGEHLALIYEYMPNGDLKQHLSGKHGGFVLSWESRLKIVLDAALGLEYLHTGCVPPMVHRDIKTTNILLDQHLQAKLADFGLSRSFPIGNEKNVSTVVAGTPGYLDPEYYQTNWLTEKSDIYSFGIVLLEIISNRPIIQQSREKPHIVEWVSFMITKGDLRSIMDPNLHQDYDIGSVWKAIELAMSCVSLSSARRPNMSRVVNELKECLISETSRIGEGRDMESKGSMEFSRDIYNEVIPQAR</sequence>
<name>Y2899_ARATH</name>
<comment type="catalytic activity">
    <reaction>
        <text>L-seryl-[protein] + ATP = O-phospho-L-seryl-[protein] + ADP + H(+)</text>
        <dbReference type="Rhea" id="RHEA:17989"/>
        <dbReference type="Rhea" id="RHEA-COMP:9863"/>
        <dbReference type="Rhea" id="RHEA-COMP:11604"/>
        <dbReference type="ChEBI" id="CHEBI:15378"/>
        <dbReference type="ChEBI" id="CHEBI:29999"/>
        <dbReference type="ChEBI" id="CHEBI:30616"/>
        <dbReference type="ChEBI" id="CHEBI:83421"/>
        <dbReference type="ChEBI" id="CHEBI:456216"/>
        <dbReference type="EC" id="2.7.11.1"/>
    </reaction>
</comment>
<comment type="catalytic activity">
    <reaction>
        <text>L-threonyl-[protein] + ATP = O-phospho-L-threonyl-[protein] + ADP + H(+)</text>
        <dbReference type="Rhea" id="RHEA:46608"/>
        <dbReference type="Rhea" id="RHEA-COMP:11060"/>
        <dbReference type="Rhea" id="RHEA-COMP:11605"/>
        <dbReference type="ChEBI" id="CHEBI:15378"/>
        <dbReference type="ChEBI" id="CHEBI:30013"/>
        <dbReference type="ChEBI" id="CHEBI:30616"/>
        <dbReference type="ChEBI" id="CHEBI:61977"/>
        <dbReference type="ChEBI" id="CHEBI:456216"/>
        <dbReference type="EC" id="2.7.11.1"/>
    </reaction>
</comment>
<comment type="subunit">
    <text evidence="6">Binds to the ammonium transporter AMT1-1.</text>
</comment>
<comment type="interaction">
    <interactant intactId="EBI-16887698">
        <id>O81069</id>
    </interactant>
    <interactant intactId="EBI-16955302">
        <id>C0LGS2</id>
        <label>At4g36180</label>
    </interactant>
    <organismsDiffer>false</organismsDiffer>
    <experiments>2</experiments>
</comment>
<comment type="interaction">
    <interactant intactId="EBI-16887698">
        <id>O81069</id>
    </interactant>
    <interactant intactId="EBI-16955335">
        <id>C0LGS3</id>
        <label>At4g37250</label>
    </interactant>
    <organismsDiffer>false</organismsDiffer>
    <experiments>2</experiments>
</comment>
<comment type="interaction">
    <interactant intactId="EBI-16887698">
        <id>O81069</id>
    </interactant>
    <interactant intactId="EBI-20655829">
        <id>A0A178VQN9</id>
        <label>AXX17_At2g39620</label>
    </interactant>
    <organismsDiffer>false</organismsDiffer>
    <experiments>2</experiments>
</comment>
<comment type="interaction">
    <interactant intactId="EBI-16887698">
        <id>O81069</id>
    </interactant>
    <interactant intactId="EBI-17071528">
        <id>Q9FRI1</id>
        <label>LRR-RLK</label>
    </interactant>
    <organismsDiffer>false</organismsDiffer>
    <experiments>3</experiments>
</comment>
<comment type="subcellular location">
    <subcellularLocation>
        <location evidence="7">Membrane</location>
        <topology evidence="7">Single-pass type I membrane protein</topology>
    </subcellularLocation>
</comment>
<comment type="similarity">
    <text evidence="3">Belongs to the protein kinase superfamily. Ser/Thr protein kinase family.</text>
</comment>
<accession>O81069</accession>
<protein>
    <recommendedName>
        <fullName>Probable leucine-rich repeat receptor-like protein kinase At2g28990</fullName>
        <ecNumber>2.7.11.1</ecNumber>
    </recommendedName>
</protein>
<proteinExistence type="evidence at protein level"/>